<comment type="function">
    <text evidence="2">One of the essential components for the initiation of protein synthesis. Protects formylmethionyl-tRNA from spontaneous hydrolysis and promotes its binding to the 30S ribosomal subunits. Also involved in the hydrolysis of GTP during the formation of the 70S ribosomal complex.</text>
</comment>
<comment type="subcellular location">
    <subcellularLocation>
        <location evidence="2">Cytoplasm</location>
    </subcellularLocation>
</comment>
<comment type="similarity">
    <text evidence="2">Belongs to the TRAFAC class translation factor GTPase superfamily. Classic translation factor GTPase family. IF-2 subfamily.</text>
</comment>
<name>IF2_ACIB3</name>
<dbReference type="EMBL" id="CP001172">
    <property type="protein sequence ID" value="ACJ57595.1"/>
    <property type="molecule type" value="Genomic_DNA"/>
</dbReference>
<dbReference type="RefSeq" id="WP_000130326.1">
    <property type="nucleotide sequence ID" value="NZ_CP001172.1"/>
</dbReference>
<dbReference type="SMR" id="B7H115"/>
<dbReference type="GeneID" id="92892331"/>
<dbReference type="HOGENOM" id="CLU_006301_6_2_6"/>
<dbReference type="Proteomes" id="UP000006924">
    <property type="component" value="Chromosome"/>
</dbReference>
<dbReference type="GO" id="GO:0005829">
    <property type="term" value="C:cytosol"/>
    <property type="evidence" value="ECO:0007669"/>
    <property type="project" value="TreeGrafter"/>
</dbReference>
<dbReference type="GO" id="GO:0005525">
    <property type="term" value="F:GTP binding"/>
    <property type="evidence" value="ECO:0007669"/>
    <property type="project" value="UniProtKB-KW"/>
</dbReference>
<dbReference type="GO" id="GO:0003924">
    <property type="term" value="F:GTPase activity"/>
    <property type="evidence" value="ECO:0007669"/>
    <property type="project" value="UniProtKB-UniRule"/>
</dbReference>
<dbReference type="GO" id="GO:0003743">
    <property type="term" value="F:translation initiation factor activity"/>
    <property type="evidence" value="ECO:0007669"/>
    <property type="project" value="UniProtKB-UniRule"/>
</dbReference>
<dbReference type="CDD" id="cd01887">
    <property type="entry name" value="IF2_eIF5B"/>
    <property type="match status" value="1"/>
</dbReference>
<dbReference type="CDD" id="cd03702">
    <property type="entry name" value="IF2_mtIF2_II"/>
    <property type="match status" value="1"/>
</dbReference>
<dbReference type="CDD" id="cd03692">
    <property type="entry name" value="mtIF2_IVc"/>
    <property type="match status" value="1"/>
</dbReference>
<dbReference type="FunFam" id="2.40.30.10:FF:000007">
    <property type="entry name" value="Translation initiation factor IF-2"/>
    <property type="match status" value="1"/>
</dbReference>
<dbReference type="FunFam" id="2.40.30.10:FF:000008">
    <property type="entry name" value="Translation initiation factor IF-2"/>
    <property type="match status" value="1"/>
</dbReference>
<dbReference type="FunFam" id="3.40.50.10050:FF:000001">
    <property type="entry name" value="Translation initiation factor IF-2"/>
    <property type="match status" value="1"/>
</dbReference>
<dbReference type="FunFam" id="3.40.50.300:FF:000019">
    <property type="entry name" value="Translation initiation factor IF-2"/>
    <property type="match status" value="1"/>
</dbReference>
<dbReference type="Gene3D" id="3.40.50.300">
    <property type="entry name" value="P-loop containing nucleotide triphosphate hydrolases"/>
    <property type="match status" value="1"/>
</dbReference>
<dbReference type="Gene3D" id="3.30.56.50">
    <property type="entry name" value="Putative DNA-binding domain, N-terminal subdomain of bacterial translation initiation factor IF2"/>
    <property type="match status" value="1"/>
</dbReference>
<dbReference type="Gene3D" id="2.40.30.10">
    <property type="entry name" value="Translation factors"/>
    <property type="match status" value="2"/>
</dbReference>
<dbReference type="Gene3D" id="3.40.50.10050">
    <property type="entry name" value="Translation initiation factor IF- 2, domain 3"/>
    <property type="match status" value="1"/>
</dbReference>
<dbReference type="HAMAP" id="MF_00100_B">
    <property type="entry name" value="IF_2_B"/>
    <property type="match status" value="1"/>
</dbReference>
<dbReference type="InterPro" id="IPR009061">
    <property type="entry name" value="DNA-bd_dom_put_sf"/>
</dbReference>
<dbReference type="InterPro" id="IPR053905">
    <property type="entry name" value="EF-G-like_DII"/>
</dbReference>
<dbReference type="InterPro" id="IPR013575">
    <property type="entry name" value="IF2_assoc_dom_bac"/>
</dbReference>
<dbReference type="InterPro" id="IPR044145">
    <property type="entry name" value="IF2_II"/>
</dbReference>
<dbReference type="InterPro" id="IPR006847">
    <property type="entry name" value="IF2_N"/>
</dbReference>
<dbReference type="InterPro" id="IPR027417">
    <property type="entry name" value="P-loop_NTPase"/>
</dbReference>
<dbReference type="InterPro" id="IPR005225">
    <property type="entry name" value="Small_GTP-bd"/>
</dbReference>
<dbReference type="InterPro" id="IPR000795">
    <property type="entry name" value="T_Tr_GTP-bd_dom"/>
</dbReference>
<dbReference type="InterPro" id="IPR000178">
    <property type="entry name" value="TF_IF2_bacterial-like"/>
</dbReference>
<dbReference type="InterPro" id="IPR015760">
    <property type="entry name" value="TIF_IF2"/>
</dbReference>
<dbReference type="InterPro" id="IPR023115">
    <property type="entry name" value="TIF_IF2_dom3"/>
</dbReference>
<dbReference type="InterPro" id="IPR036925">
    <property type="entry name" value="TIF_IF2_dom3_sf"/>
</dbReference>
<dbReference type="InterPro" id="IPR009000">
    <property type="entry name" value="Transl_B-barrel_sf"/>
</dbReference>
<dbReference type="NCBIfam" id="TIGR00487">
    <property type="entry name" value="IF-2"/>
    <property type="match status" value="1"/>
</dbReference>
<dbReference type="NCBIfam" id="TIGR00231">
    <property type="entry name" value="small_GTP"/>
    <property type="match status" value="1"/>
</dbReference>
<dbReference type="PANTHER" id="PTHR43381:SF5">
    <property type="entry name" value="TR-TYPE G DOMAIN-CONTAINING PROTEIN"/>
    <property type="match status" value="1"/>
</dbReference>
<dbReference type="PANTHER" id="PTHR43381">
    <property type="entry name" value="TRANSLATION INITIATION FACTOR IF-2-RELATED"/>
    <property type="match status" value="1"/>
</dbReference>
<dbReference type="Pfam" id="PF22042">
    <property type="entry name" value="EF-G_D2"/>
    <property type="match status" value="1"/>
</dbReference>
<dbReference type="Pfam" id="PF00009">
    <property type="entry name" value="GTP_EFTU"/>
    <property type="match status" value="1"/>
</dbReference>
<dbReference type="Pfam" id="PF11987">
    <property type="entry name" value="IF-2"/>
    <property type="match status" value="1"/>
</dbReference>
<dbReference type="Pfam" id="PF08364">
    <property type="entry name" value="IF2_assoc"/>
    <property type="match status" value="1"/>
</dbReference>
<dbReference type="Pfam" id="PF04760">
    <property type="entry name" value="IF2_N"/>
    <property type="match status" value="1"/>
</dbReference>
<dbReference type="SUPFAM" id="SSF52156">
    <property type="entry name" value="Initiation factor IF2/eIF5b, domain 3"/>
    <property type="match status" value="1"/>
</dbReference>
<dbReference type="SUPFAM" id="SSF52540">
    <property type="entry name" value="P-loop containing nucleoside triphosphate hydrolases"/>
    <property type="match status" value="1"/>
</dbReference>
<dbReference type="SUPFAM" id="SSF46955">
    <property type="entry name" value="Putative DNA-binding domain"/>
    <property type="match status" value="1"/>
</dbReference>
<dbReference type="SUPFAM" id="SSF50447">
    <property type="entry name" value="Translation proteins"/>
    <property type="match status" value="2"/>
</dbReference>
<dbReference type="PROSITE" id="PS51722">
    <property type="entry name" value="G_TR_2"/>
    <property type="match status" value="1"/>
</dbReference>
<dbReference type="PROSITE" id="PS01176">
    <property type="entry name" value="IF2"/>
    <property type="match status" value="1"/>
</dbReference>
<gene>
    <name evidence="2" type="primary">infB</name>
    <name type="ordered locus">ABBFA_003199</name>
</gene>
<reference key="1">
    <citation type="journal article" date="2008" name="J. Bacteriol.">
        <title>Comparative genome sequence analysis of multidrug-resistant Acinetobacter baumannii.</title>
        <authorList>
            <person name="Adams M.D."/>
            <person name="Goglin K."/>
            <person name="Molyneaux N."/>
            <person name="Hujer K.M."/>
            <person name="Lavender H."/>
            <person name="Jamison J.J."/>
            <person name="MacDonald I.J."/>
            <person name="Martin K.M."/>
            <person name="Russo T."/>
            <person name="Campagnari A.A."/>
            <person name="Hujer A.M."/>
            <person name="Bonomo R.A."/>
            <person name="Gill S.R."/>
        </authorList>
    </citation>
    <scope>NUCLEOTIDE SEQUENCE [LARGE SCALE GENOMIC DNA]</scope>
    <source>
        <strain>AB307-0294</strain>
    </source>
</reference>
<keyword id="KW-0963">Cytoplasm</keyword>
<keyword id="KW-0342">GTP-binding</keyword>
<keyword id="KW-0396">Initiation factor</keyword>
<keyword id="KW-0547">Nucleotide-binding</keyword>
<keyword id="KW-0648">Protein biosynthesis</keyword>
<protein>
    <recommendedName>
        <fullName evidence="2">Translation initiation factor IF-2</fullName>
    </recommendedName>
</protein>
<accession>B7H115</accession>
<sequence length="899" mass="97315">MTDKSIKELALSVGRPVEKLLEQAREAGLPQRTADDIITTEQQDTLVNYLKKVHGQESGNTGKIALKRKTTSTAKVASTSGKAKTINVEVRKKQVFAKPNPEQIAAEAKARAEAEAKARAEQQAREAAEQKARLQTEQKAKATLDAMRAAHQQDSAAQSAPKAAVVVKKRGGGTVKPAPKPAETLEQKKAREAQTAQLKATEEAARRKAAEEAQQRTLEQMRKMASKYSNDDATATIRVIDDSPLASGLVGQAYEDSFNQEDREIKRGGATTNPRAGKKGGRRGQEEQSFVNHNKRGLKSSQANKHGFEKPVKKQVYDVEIGSSIVVADLAQKMAIKVREVIKTLMKMGELVNQNQTIDQDTAALVVEEMGHNPVLVSDTQAEDNLLEAAEEARGEQTTRPPVVTIMGHVDHGKTSLLDRIRRSKVAAGEAGGITQHIGAYHVETDKGIITFLDTPGHAAFTSMRARGAKATDIVVLVVAADDGVMPQTAEAIDHARAAGTPIIVAINKMDKESADPDRVLNELTTKEIVPEEWGGDVPVAKVSAHTGQGIDELLDLILIQSELMELKASAEGAAQGVVIEARVDKGRGAVTSILVQNGTLNIGDLVLAGSSYGRVRAMSDENGKPIKSAGPSIPVEILGLPEAPMAGDEVLVVNDEKKAREVADARADREREKRIERQSAMRLENIMASMGKKDVPTVNVVLRTDVRGTLEALNAALHELSTDEVKVRVISSGVGAITESDVILAESSEAVLLGFNVRADTAARQKSDQDGIDIRYYSIIYELIDDVKDAMSGKLAPEHRETILGVAQVREVFRSSKFGAAAGCMVMEGVIHRNKPIRVLRDDVVIFQGELESLRRYKDVVDEVRAGMECGLAVKGYNDIKPLDKIEVYDVQMVKRSL</sequence>
<feature type="chain" id="PRO_1000117317" description="Translation initiation factor IF-2">
    <location>
        <begin position="1"/>
        <end position="899"/>
    </location>
</feature>
<feature type="domain" description="tr-type G">
    <location>
        <begin position="399"/>
        <end position="568"/>
    </location>
</feature>
<feature type="region of interest" description="Disordered" evidence="3">
    <location>
        <begin position="116"/>
        <end position="135"/>
    </location>
</feature>
<feature type="region of interest" description="Disordered" evidence="3">
    <location>
        <begin position="170"/>
        <end position="189"/>
    </location>
</feature>
<feature type="region of interest" description="Disordered" evidence="3">
    <location>
        <begin position="262"/>
        <end position="306"/>
    </location>
</feature>
<feature type="region of interest" description="G1" evidence="1">
    <location>
        <begin position="408"/>
        <end position="415"/>
    </location>
</feature>
<feature type="region of interest" description="G2" evidence="1">
    <location>
        <begin position="433"/>
        <end position="437"/>
    </location>
</feature>
<feature type="region of interest" description="G3" evidence="1">
    <location>
        <begin position="454"/>
        <end position="457"/>
    </location>
</feature>
<feature type="region of interest" description="G4" evidence="1">
    <location>
        <begin position="508"/>
        <end position="511"/>
    </location>
</feature>
<feature type="region of interest" description="G5" evidence="1">
    <location>
        <begin position="544"/>
        <end position="546"/>
    </location>
</feature>
<feature type="binding site" evidence="2">
    <location>
        <begin position="408"/>
        <end position="415"/>
    </location>
    <ligand>
        <name>GTP</name>
        <dbReference type="ChEBI" id="CHEBI:37565"/>
    </ligand>
</feature>
<feature type="binding site" evidence="2">
    <location>
        <begin position="454"/>
        <end position="458"/>
    </location>
    <ligand>
        <name>GTP</name>
        <dbReference type="ChEBI" id="CHEBI:37565"/>
    </ligand>
</feature>
<feature type="binding site" evidence="2">
    <location>
        <begin position="508"/>
        <end position="511"/>
    </location>
    <ligand>
        <name>GTP</name>
        <dbReference type="ChEBI" id="CHEBI:37565"/>
    </ligand>
</feature>
<evidence type="ECO:0000250" key="1"/>
<evidence type="ECO:0000255" key="2">
    <source>
        <dbReference type="HAMAP-Rule" id="MF_00100"/>
    </source>
</evidence>
<evidence type="ECO:0000256" key="3">
    <source>
        <dbReference type="SAM" id="MobiDB-lite"/>
    </source>
</evidence>
<organism>
    <name type="scientific">Acinetobacter baumannii (strain AB307-0294)</name>
    <dbReference type="NCBI Taxonomy" id="557600"/>
    <lineage>
        <taxon>Bacteria</taxon>
        <taxon>Pseudomonadati</taxon>
        <taxon>Pseudomonadota</taxon>
        <taxon>Gammaproteobacteria</taxon>
        <taxon>Moraxellales</taxon>
        <taxon>Moraxellaceae</taxon>
        <taxon>Acinetobacter</taxon>
        <taxon>Acinetobacter calcoaceticus/baumannii complex</taxon>
    </lineage>
</organism>
<proteinExistence type="inferred from homology"/>